<comment type="function">
    <text evidence="1">Prenyltransferase that catalyzes the transfer of the geranylgeranyl moiety of geranylgeranyl diphosphate (GGPP) to the C2 hydroxyl of (S)-3-O-geranylgeranylglyceryl phosphate (GGGP). This reaction is the second ether-bond-formation step in the biosynthesis of archaeal membrane lipids.</text>
</comment>
<comment type="catalytic activity">
    <reaction evidence="1">
        <text>sn-3-O-(geranylgeranyl)glycerol 1-phosphate + (2E,6E,10E)-geranylgeranyl diphosphate = 2,3-bis-O-(geranylgeranyl)-sn-glycerol 1-phosphate + diphosphate</text>
        <dbReference type="Rhea" id="RHEA:18109"/>
        <dbReference type="ChEBI" id="CHEBI:33019"/>
        <dbReference type="ChEBI" id="CHEBI:57677"/>
        <dbReference type="ChEBI" id="CHEBI:58756"/>
        <dbReference type="ChEBI" id="CHEBI:58837"/>
        <dbReference type="EC" id="2.5.1.42"/>
    </reaction>
</comment>
<comment type="cofactor">
    <cofactor evidence="1">
        <name>Mg(2+)</name>
        <dbReference type="ChEBI" id="CHEBI:18420"/>
    </cofactor>
</comment>
<comment type="pathway">
    <text evidence="1">Membrane lipid metabolism; glycerophospholipid metabolism.</text>
</comment>
<comment type="subcellular location">
    <subcellularLocation>
        <location evidence="1">Cell membrane</location>
        <topology evidence="1">Multi-pass membrane protein</topology>
    </subcellularLocation>
</comment>
<comment type="similarity">
    <text evidence="1">Belongs to the UbiA prenyltransferase family. DGGGP synthase subfamily.</text>
</comment>
<evidence type="ECO:0000255" key="1">
    <source>
        <dbReference type="HAMAP-Rule" id="MF_01286"/>
    </source>
</evidence>
<sequence>MDIKAYFELIRLKNCLTASFGAFIGGLIASYFNLATVYDLILASIVVFLVCGFGNALNDIYDLKIDKINKPERPIPSKRLSLTDARVFSYLLVFVGLFISLFNMACFLMAVLNSIVLQQYASTYKKNKIIGNLIVAYLTGSVFIFGGIAVGNIDVTIMLFLCALFAMWSREIIKDYEDIEGDIQEKVISIPIKCGEKSVYIAAFLLVFAVFLSPLPYLFGFFGIYYMLSVVFCDLLFLIGIYNLVKNPSKKEAKKASRNIKIVTNLVLIAFLIGSLFK</sequence>
<protein>
    <recommendedName>
        <fullName evidence="1">Digeranylgeranylglyceryl phosphate synthase</fullName>
        <shortName evidence="1">DGGGP synthase</shortName>
        <shortName evidence="1">DGGGPS</shortName>
        <ecNumber evidence="1">2.5.1.42</ecNumber>
    </recommendedName>
    <alternativeName>
        <fullName evidence="1">(S)-2,3-di-O-geranylgeranylglyceryl phosphate synthase</fullName>
    </alternativeName>
    <alternativeName>
        <fullName evidence="1">Geranylgeranylglycerol-phosphate geranylgeranyltransferase</fullName>
    </alternativeName>
</protein>
<accession>A6VHU1</accession>
<organism>
    <name type="scientific">Methanococcus maripaludis (strain C7 / ATCC BAA-1331)</name>
    <dbReference type="NCBI Taxonomy" id="426368"/>
    <lineage>
        <taxon>Archaea</taxon>
        <taxon>Methanobacteriati</taxon>
        <taxon>Methanobacteriota</taxon>
        <taxon>Methanomada group</taxon>
        <taxon>Methanococci</taxon>
        <taxon>Methanococcales</taxon>
        <taxon>Methanococcaceae</taxon>
        <taxon>Methanococcus</taxon>
    </lineage>
</organism>
<name>DGGGP_METM7</name>
<gene>
    <name type="ordered locus">MmarC7_0950</name>
</gene>
<dbReference type="EC" id="2.5.1.42" evidence="1"/>
<dbReference type="EMBL" id="CP000745">
    <property type="protein sequence ID" value="ABR66017.1"/>
    <property type="molecule type" value="Genomic_DNA"/>
</dbReference>
<dbReference type="SMR" id="A6VHU1"/>
<dbReference type="STRING" id="426368.MmarC7_0950"/>
<dbReference type="KEGG" id="mmz:MmarC7_0950"/>
<dbReference type="eggNOG" id="arCOG00476">
    <property type="taxonomic scope" value="Archaea"/>
</dbReference>
<dbReference type="HOGENOM" id="CLU_073311_1_1_2"/>
<dbReference type="OrthoDB" id="11851at2157"/>
<dbReference type="UniPathway" id="UPA00940"/>
<dbReference type="GO" id="GO:0005886">
    <property type="term" value="C:plasma membrane"/>
    <property type="evidence" value="ECO:0007669"/>
    <property type="project" value="UniProtKB-SubCell"/>
</dbReference>
<dbReference type="GO" id="GO:0047295">
    <property type="term" value="F:geranylgeranylglycerol-phosphate geranylgeranyltransferase activity"/>
    <property type="evidence" value="ECO:0007669"/>
    <property type="project" value="UniProtKB-UniRule"/>
</dbReference>
<dbReference type="GO" id="GO:0000287">
    <property type="term" value="F:magnesium ion binding"/>
    <property type="evidence" value="ECO:0007669"/>
    <property type="project" value="UniProtKB-UniRule"/>
</dbReference>
<dbReference type="GO" id="GO:0046474">
    <property type="term" value="P:glycerophospholipid biosynthetic process"/>
    <property type="evidence" value="ECO:0007669"/>
    <property type="project" value="UniProtKB-UniRule"/>
</dbReference>
<dbReference type="CDD" id="cd13961">
    <property type="entry name" value="PT_UbiA_DGGGPS"/>
    <property type="match status" value="1"/>
</dbReference>
<dbReference type="Gene3D" id="1.10.357.140">
    <property type="entry name" value="UbiA prenyltransferase"/>
    <property type="match status" value="1"/>
</dbReference>
<dbReference type="Gene3D" id="1.20.120.1780">
    <property type="entry name" value="UbiA prenyltransferase"/>
    <property type="match status" value="1"/>
</dbReference>
<dbReference type="HAMAP" id="MF_01286">
    <property type="entry name" value="DGGGP_synth"/>
    <property type="match status" value="1"/>
</dbReference>
<dbReference type="InterPro" id="IPR023547">
    <property type="entry name" value="DGGGP_synth"/>
</dbReference>
<dbReference type="InterPro" id="IPR050475">
    <property type="entry name" value="Prenyltransferase_related"/>
</dbReference>
<dbReference type="InterPro" id="IPR000537">
    <property type="entry name" value="UbiA_prenyltransferase"/>
</dbReference>
<dbReference type="InterPro" id="IPR044878">
    <property type="entry name" value="UbiA_sf"/>
</dbReference>
<dbReference type="PANTHER" id="PTHR42723">
    <property type="entry name" value="CHLOROPHYLL SYNTHASE"/>
    <property type="match status" value="1"/>
</dbReference>
<dbReference type="PANTHER" id="PTHR42723:SF1">
    <property type="entry name" value="CHLOROPHYLL SYNTHASE, CHLOROPLASTIC"/>
    <property type="match status" value="1"/>
</dbReference>
<dbReference type="Pfam" id="PF01040">
    <property type="entry name" value="UbiA"/>
    <property type="match status" value="1"/>
</dbReference>
<reference key="1">
    <citation type="submission" date="2007-06" db="EMBL/GenBank/DDBJ databases">
        <title>Complete sequence of Methanococcus maripaludis C7.</title>
        <authorList>
            <consortium name="US DOE Joint Genome Institute"/>
            <person name="Copeland A."/>
            <person name="Lucas S."/>
            <person name="Lapidus A."/>
            <person name="Barry K."/>
            <person name="Glavina del Rio T."/>
            <person name="Dalin E."/>
            <person name="Tice H."/>
            <person name="Pitluck S."/>
            <person name="Clum A."/>
            <person name="Schmutz J."/>
            <person name="Larimer F."/>
            <person name="Land M."/>
            <person name="Hauser L."/>
            <person name="Kyrpides N."/>
            <person name="Anderson I."/>
            <person name="Sieprawska-Lupa M."/>
            <person name="Whitman W.B."/>
            <person name="Richardson P."/>
        </authorList>
    </citation>
    <scope>NUCLEOTIDE SEQUENCE [LARGE SCALE GENOMIC DNA]</scope>
    <source>
        <strain>C7 / ATCC BAA-1331</strain>
    </source>
</reference>
<keyword id="KW-1003">Cell membrane</keyword>
<keyword id="KW-0444">Lipid biosynthesis</keyword>
<keyword id="KW-0443">Lipid metabolism</keyword>
<keyword id="KW-0460">Magnesium</keyword>
<keyword id="KW-0472">Membrane</keyword>
<keyword id="KW-0594">Phospholipid biosynthesis</keyword>
<keyword id="KW-1208">Phospholipid metabolism</keyword>
<keyword id="KW-0808">Transferase</keyword>
<keyword id="KW-0812">Transmembrane</keyword>
<keyword id="KW-1133">Transmembrane helix</keyword>
<proteinExistence type="inferred from homology"/>
<feature type="chain" id="PRO_0000350705" description="Digeranylgeranylglyceryl phosphate synthase">
    <location>
        <begin position="1"/>
        <end position="278"/>
    </location>
</feature>
<feature type="transmembrane region" description="Helical" evidence="1">
    <location>
        <begin position="12"/>
        <end position="32"/>
    </location>
</feature>
<feature type="transmembrane region" description="Helical" evidence="1">
    <location>
        <begin position="34"/>
        <end position="54"/>
    </location>
</feature>
<feature type="transmembrane region" description="Helical" evidence="1">
    <location>
        <begin position="91"/>
        <end position="111"/>
    </location>
</feature>
<feature type="transmembrane region" description="Helical" evidence="1">
    <location>
        <begin position="129"/>
        <end position="149"/>
    </location>
</feature>
<feature type="transmembrane region" description="Helical" evidence="1">
    <location>
        <begin position="153"/>
        <end position="173"/>
    </location>
</feature>
<feature type="transmembrane region" description="Helical" evidence="1">
    <location>
        <begin position="204"/>
        <end position="224"/>
    </location>
</feature>
<feature type="transmembrane region" description="Helical" evidence="1">
    <location>
        <begin position="225"/>
        <end position="245"/>
    </location>
</feature>
<feature type="transmembrane region" description="Helical" evidence="1">
    <location>
        <begin position="257"/>
        <end position="277"/>
    </location>
</feature>